<comment type="function">
    <text evidence="1">Plays a role in the inhibition of type I interferon signaling pathway. Mechanistically, specifically interacts with 2',3'-cGAMP and cleaves it via its phosphodiesterase activity. In turn, prevents 2',3'-cGAMP interaction with host ER-resident STING1 leading to inhibition of downstream signaling pathway and type I interferon production.</text>
</comment>
<comment type="subcellular location">
    <subcellularLocation>
        <location evidence="1">Virion</location>
    </subcellularLocation>
</comment>
<comment type="similarity">
    <text evidence="2">Belongs to the asfivirus C129R family.</text>
</comment>
<organismHost>
    <name type="scientific">Ornithodoros</name>
    <name type="common">relapsing fever ticks</name>
    <dbReference type="NCBI Taxonomy" id="6937"/>
</organismHost>
<organismHost>
    <name type="scientific">Phacochoerus aethiopicus</name>
    <name type="common">Warthog</name>
    <dbReference type="NCBI Taxonomy" id="85517"/>
</organismHost>
<organismHost>
    <name type="scientific">Phacochoerus africanus</name>
    <name type="common">Warthog</name>
    <dbReference type="NCBI Taxonomy" id="41426"/>
</organismHost>
<organismHost>
    <name type="scientific">Potamochoerus larvatus</name>
    <name type="common">Bushpig</name>
    <dbReference type="NCBI Taxonomy" id="273792"/>
</organismHost>
<organismHost>
    <name type="scientific">Sus scrofa</name>
    <name type="common">Pig</name>
    <dbReference type="NCBI Taxonomy" id="9823"/>
</organismHost>
<accession>P0CA37</accession>
<gene>
    <name type="ordered locus">Mal-070</name>
</gene>
<proteinExistence type="inferred from homology"/>
<name>VF129_ASFM2</name>
<evidence type="ECO:0000250" key="1">
    <source>
        <dbReference type="UniProtKB" id="Q65154"/>
    </source>
</evidence>
<evidence type="ECO:0000305" key="2"/>
<keyword id="KW-0945">Host-virus interaction</keyword>
<keyword id="KW-0378">Hydrolase</keyword>
<keyword id="KW-1090">Inhibition of host innate immune response by virus</keyword>
<keyword id="KW-1114">Inhibition of host interferon signaling pathway by virus</keyword>
<keyword id="KW-0922">Interferon antiviral system evasion</keyword>
<keyword id="KW-0899">Viral immunoevasion</keyword>
<keyword id="KW-0946">Virion</keyword>
<organism>
    <name type="scientific">African swine fever virus (isolate Tick/Malawi/Lil 20-1/1983)</name>
    <name type="common">ASFV</name>
    <dbReference type="NCBI Taxonomy" id="10500"/>
    <lineage>
        <taxon>Viruses</taxon>
        <taxon>Varidnaviria</taxon>
        <taxon>Bamfordvirae</taxon>
        <taxon>Nucleocytoviricota</taxon>
        <taxon>Pokkesviricetes</taxon>
        <taxon>Asfuvirales</taxon>
        <taxon>Asfarviridae</taxon>
        <taxon>Asfivirus</taxon>
        <taxon>African swine fever virus</taxon>
    </lineage>
</organism>
<feature type="chain" id="PRO_0000373507" description="Uncharacterized protein C129R">
    <location>
        <begin position="1"/>
        <end position="129"/>
    </location>
</feature>
<protein>
    <recommendedName>
        <fullName>Uncharacterized protein C129R</fullName>
        <shortName>pC129R</shortName>
        <ecNumber evidence="1">3.1.4.-</ecNumber>
    </recommendedName>
</protein>
<reference key="1">
    <citation type="submission" date="2003-03" db="EMBL/GenBank/DDBJ databases">
        <title>African swine fever virus genomes.</title>
        <authorList>
            <person name="Kutish G.F."/>
            <person name="Rock D.L."/>
        </authorList>
    </citation>
    <scope>NUCLEOTIDE SEQUENCE [LARGE SCALE GENOMIC DNA]</scope>
</reference>
<sequence length="129" mass="15055">MEHPSTNYTPEQQHEKLKHYVLIPKHLWSYIKYGTHVRYYTTQNVFRVGGFVLQNPYEAVIKNEVKMAIRLQNSFNTKAKGYVTWTVAYNDISKLYAKPDAIMLTIQENVEKALHALNQNVLTLASKIR</sequence>
<dbReference type="EC" id="3.1.4.-" evidence="1"/>
<dbReference type="EMBL" id="AY261361">
    <property type="status" value="NOT_ANNOTATED_CDS"/>
    <property type="molecule type" value="Genomic_DNA"/>
</dbReference>
<dbReference type="Proteomes" id="UP000000860">
    <property type="component" value="Segment"/>
</dbReference>
<dbReference type="GO" id="GO:0044423">
    <property type="term" value="C:virion component"/>
    <property type="evidence" value="ECO:0007669"/>
    <property type="project" value="UniProtKB-KW"/>
</dbReference>
<dbReference type="GO" id="GO:0016787">
    <property type="term" value="F:hydrolase activity"/>
    <property type="evidence" value="ECO:0007669"/>
    <property type="project" value="UniProtKB-KW"/>
</dbReference>
<dbReference type="GO" id="GO:0052170">
    <property type="term" value="P:symbiont-mediated suppression of host innate immune response"/>
    <property type="evidence" value="ECO:0007669"/>
    <property type="project" value="UniProtKB-KW"/>
</dbReference>
<dbReference type="GO" id="GO:0039502">
    <property type="term" value="P:symbiont-mediated suppression of host type I interferon-mediated signaling pathway"/>
    <property type="evidence" value="ECO:0007669"/>
    <property type="project" value="UniProtKB-KW"/>
</dbReference>